<gene>
    <name evidence="1" type="primary">cysA2</name>
    <name type="synonym">cysA-2</name>
    <name type="ordered locus">SO_4655</name>
</gene>
<proteinExistence type="inferred from homology"/>
<name>CYSA2_SHEON</name>
<dbReference type="EC" id="7.3.2.3" evidence="1"/>
<dbReference type="EMBL" id="AE014299">
    <property type="protein sequence ID" value="AAN57615.1"/>
    <property type="molecule type" value="Genomic_DNA"/>
</dbReference>
<dbReference type="RefSeq" id="NP_720171.1">
    <property type="nucleotide sequence ID" value="NC_004347.2"/>
</dbReference>
<dbReference type="RefSeq" id="WP_011074249.1">
    <property type="nucleotide sequence ID" value="NC_004347.2"/>
</dbReference>
<dbReference type="SMR" id="Q8E8K8"/>
<dbReference type="STRING" id="211586.SO_4655"/>
<dbReference type="PaxDb" id="211586-SO_4655"/>
<dbReference type="KEGG" id="son:SO_4655"/>
<dbReference type="PATRIC" id="fig|211586.12.peg.4511"/>
<dbReference type="eggNOG" id="COG1118">
    <property type="taxonomic scope" value="Bacteria"/>
</dbReference>
<dbReference type="HOGENOM" id="CLU_000604_1_1_6"/>
<dbReference type="OrthoDB" id="9802264at2"/>
<dbReference type="PhylomeDB" id="Q8E8K8"/>
<dbReference type="BioCyc" id="SONE211586:G1GMP-4302-MONOMER"/>
<dbReference type="Proteomes" id="UP000008186">
    <property type="component" value="Chromosome"/>
</dbReference>
<dbReference type="GO" id="GO:0043190">
    <property type="term" value="C:ATP-binding cassette (ABC) transporter complex"/>
    <property type="evidence" value="ECO:0007669"/>
    <property type="project" value="InterPro"/>
</dbReference>
<dbReference type="GO" id="GO:0015419">
    <property type="term" value="F:ABC-type sulfate transporter activity"/>
    <property type="evidence" value="ECO:0007669"/>
    <property type="project" value="InterPro"/>
</dbReference>
<dbReference type="GO" id="GO:0102025">
    <property type="term" value="F:ABC-type thiosulfate transporter activity"/>
    <property type="evidence" value="ECO:0007669"/>
    <property type="project" value="RHEA"/>
</dbReference>
<dbReference type="GO" id="GO:0005524">
    <property type="term" value="F:ATP binding"/>
    <property type="evidence" value="ECO:0007669"/>
    <property type="project" value="UniProtKB-KW"/>
</dbReference>
<dbReference type="GO" id="GO:0016887">
    <property type="term" value="F:ATP hydrolysis activity"/>
    <property type="evidence" value="ECO:0007669"/>
    <property type="project" value="InterPro"/>
</dbReference>
<dbReference type="GO" id="GO:1902358">
    <property type="term" value="P:sulfate transmembrane transport"/>
    <property type="evidence" value="ECO:0000318"/>
    <property type="project" value="GO_Central"/>
</dbReference>
<dbReference type="CDD" id="cd03296">
    <property type="entry name" value="ABC_CysA_sulfate_importer"/>
    <property type="match status" value="1"/>
</dbReference>
<dbReference type="FunFam" id="3.40.50.300:FF:000227">
    <property type="entry name" value="Sulfate/thiosulfate import ATP-binding protein CysA"/>
    <property type="match status" value="1"/>
</dbReference>
<dbReference type="Gene3D" id="3.40.50.300">
    <property type="entry name" value="P-loop containing nucleotide triphosphate hydrolases"/>
    <property type="match status" value="1"/>
</dbReference>
<dbReference type="InterPro" id="IPR003593">
    <property type="entry name" value="AAA+_ATPase"/>
</dbReference>
<dbReference type="InterPro" id="IPR050093">
    <property type="entry name" value="ABC_SmlMolc_Importer"/>
</dbReference>
<dbReference type="InterPro" id="IPR003439">
    <property type="entry name" value="ABC_transporter-like_ATP-bd"/>
</dbReference>
<dbReference type="InterPro" id="IPR017871">
    <property type="entry name" value="ABC_transporter-like_CS"/>
</dbReference>
<dbReference type="InterPro" id="IPR041193">
    <property type="entry name" value="CysA_C"/>
</dbReference>
<dbReference type="InterPro" id="IPR008995">
    <property type="entry name" value="Mo/tungstate-bd_C_term_dom"/>
</dbReference>
<dbReference type="InterPro" id="IPR027417">
    <property type="entry name" value="P-loop_NTPase"/>
</dbReference>
<dbReference type="InterPro" id="IPR005666">
    <property type="entry name" value="Sulph_transpt1"/>
</dbReference>
<dbReference type="InterPro" id="IPR024765">
    <property type="entry name" value="TOBE-like"/>
</dbReference>
<dbReference type="NCBIfam" id="TIGR00968">
    <property type="entry name" value="3a0106s01"/>
    <property type="match status" value="1"/>
</dbReference>
<dbReference type="PANTHER" id="PTHR42781">
    <property type="entry name" value="SPERMIDINE/PUTRESCINE IMPORT ATP-BINDING PROTEIN POTA"/>
    <property type="match status" value="1"/>
</dbReference>
<dbReference type="PANTHER" id="PTHR42781:SF4">
    <property type="entry name" value="SPERMIDINE_PUTRESCINE IMPORT ATP-BINDING PROTEIN POTA"/>
    <property type="match status" value="1"/>
</dbReference>
<dbReference type="Pfam" id="PF00005">
    <property type="entry name" value="ABC_tran"/>
    <property type="match status" value="1"/>
</dbReference>
<dbReference type="Pfam" id="PF17850">
    <property type="entry name" value="CysA_C_terminal"/>
    <property type="match status" value="1"/>
</dbReference>
<dbReference type="Pfam" id="PF12857">
    <property type="entry name" value="TOBE_3"/>
    <property type="match status" value="1"/>
</dbReference>
<dbReference type="SMART" id="SM00382">
    <property type="entry name" value="AAA"/>
    <property type="match status" value="1"/>
</dbReference>
<dbReference type="SUPFAM" id="SSF50331">
    <property type="entry name" value="MOP-like"/>
    <property type="match status" value="1"/>
</dbReference>
<dbReference type="SUPFAM" id="SSF52540">
    <property type="entry name" value="P-loop containing nucleoside triphosphate hydrolases"/>
    <property type="match status" value="1"/>
</dbReference>
<dbReference type="PROSITE" id="PS00211">
    <property type="entry name" value="ABC_TRANSPORTER_1"/>
    <property type="match status" value="1"/>
</dbReference>
<dbReference type="PROSITE" id="PS50893">
    <property type="entry name" value="ABC_TRANSPORTER_2"/>
    <property type="match status" value="1"/>
</dbReference>
<dbReference type="PROSITE" id="PS51237">
    <property type="entry name" value="CYSA"/>
    <property type="match status" value="1"/>
</dbReference>
<keyword id="KW-0067">ATP-binding</keyword>
<keyword id="KW-0997">Cell inner membrane</keyword>
<keyword id="KW-1003">Cell membrane</keyword>
<keyword id="KW-0472">Membrane</keyword>
<keyword id="KW-0547">Nucleotide-binding</keyword>
<keyword id="KW-1185">Reference proteome</keyword>
<keyword id="KW-0764">Sulfate transport</keyword>
<keyword id="KW-1278">Translocase</keyword>
<keyword id="KW-0813">Transport</keyword>
<evidence type="ECO:0000255" key="1">
    <source>
        <dbReference type="HAMAP-Rule" id="MF_01701"/>
    </source>
</evidence>
<accession>Q8E8K8</accession>
<protein>
    <recommendedName>
        <fullName evidence="1">Sulfate/thiosulfate import ATP-binding protein CysA 2</fullName>
        <ecNumber evidence="1">7.3.2.3</ecNumber>
    </recommendedName>
    <alternativeName>
        <fullName evidence="1">Sulfate-transporting ATPase 2</fullName>
    </alternativeName>
</protein>
<organism>
    <name type="scientific">Shewanella oneidensis (strain ATCC 700550 / JCM 31522 / CIP 106686 / LMG 19005 / NCIMB 14063 / MR-1)</name>
    <dbReference type="NCBI Taxonomy" id="211586"/>
    <lineage>
        <taxon>Bacteria</taxon>
        <taxon>Pseudomonadati</taxon>
        <taxon>Pseudomonadota</taxon>
        <taxon>Gammaproteobacteria</taxon>
        <taxon>Alteromonadales</taxon>
        <taxon>Shewanellaceae</taxon>
        <taxon>Shewanella</taxon>
    </lineage>
</organism>
<reference key="1">
    <citation type="journal article" date="2002" name="Nat. Biotechnol.">
        <title>Genome sequence of the dissimilatory metal ion-reducing bacterium Shewanella oneidensis.</title>
        <authorList>
            <person name="Heidelberg J.F."/>
            <person name="Paulsen I.T."/>
            <person name="Nelson K.E."/>
            <person name="Gaidos E.J."/>
            <person name="Nelson W.C."/>
            <person name="Read T.D."/>
            <person name="Eisen J.A."/>
            <person name="Seshadri R."/>
            <person name="Ward N.L."/>
            <person name="Methe B.A."/>
            <person name="Clayton R.A."/>
            <person name="Meyer T."/>
            <person name="Tsapin A."/>
            <person name="Scott J."/>
            <person name="Beanan M.J."/>
            <person name="Brinkac L.M."/>
            <person name="Daugherty S.C."/>
            <person name="DeBoy R.T."/>
            <person name="Dodson R.J."/>
            <person name="Durkin A.S."/>
            <person name="Haft D.H."/>
            <person name="Kolonay J.F."/>
            <person name="Madupu R."/>
            <person name="Peterson J.D."/>
            <person name="Umayam L.A."/>
            <person name="White O."/>
            <person name="Wolf A.M."/>
            <person name="Vamathevan J.J."/>
            <person name="Weidman J.F."/>
            <person name="Impraim M."/>
            <person name="Lee K."/>
            <person name="Berry K.J."/>
            <person name="Lee C."/>
            <person name="Mueller J."/>
            <person name="Khouri H.M."/>
            <person name="Gill J."/>
            <person name="Utterback T.R."/>
            <person name="McDonald L.A."/>
            <person name="Feldblyum T.V."/>
            <person name="Smith H.O."/>
            <person name="Venter J.C."/>
            <person name="Nealson K.H."/>
            <person name="Fraser C.M."/>
        </authorList>
    </citation>
    <scope>NUCLEOTIDE SEQUENCE [LARGE SCALE GENOMIC DNA]</scope>
    <source>
        <strain>ATCC 700550 / JCM 31522 / CIP 106686 / LMG 19005 / NCIMB 14063 / MR-1</strain>
    </source>
</reference>
<comment type="function">
    <text evidence="1">Part of the ABC transporter complex CysAWTP involved in sulfate/thiosulfate import. Responsible for energy coupling to the transport system.</text>
</comment>
<comment type="catalytic activity">
    <reaction evidence="1">
        <text>sulfate(out) + ATP + H2O = sulfate(in) + ADP + phosphate + H(+)</text>
        <dbReference type="Rhea" id="RHEA:10192"/>
        <dbReference type="ChEBI" id="CHEBI:15377"/>
        <dbReference type="ChEBI" id="CHEBI:15378"/>
        <dbReference type="ChEBI" id="CHEBI:16189"/>
        <dbReference type="ChEBI" id="CHEBI:30616"/>
        <dbReference type="ChEBI" id="CHEBI:43474"/>
        <dbReference type="ChEBI" id="CHEBI:456216"/>
        <dbReference type="EC" id="7.3.2.3"/>
    </reaction>
</comment>
<comment type="catalytic activity">
    <reaction evidence="1">
        <text>thiosulfate(out) + ATP + H2O = thiosulfate(in) + ADP + phosphate + H(+)</text>
        <dbReference type="Rhea" id="RHEA:29871"/>
        <dbReference type="ChEBI" id="CHEBI:15377"/>
        <dbReference type="ChEBI" id="CHEBI:15378"/>
        <dbReference type="ChEBI" id="CHEBI:30616"/>
        <dbReference type="ChEBI" id="CHEBI:33542"/>
        <dbReference type="ChEBI" id="CHEBI:43474"/>
        <dbReference type="ChEBI" id="CHEBI:456216"/>
        <dbReference type="EC" id="7.3.2.3"/>
    </reaction>
</comment>
<comment type="subunit">
    <text evidence="1">The complex is composed of two ATP-binding proteins (CysA), two transmembrane proteins (CysT and CysW) and a solute-binding protein (CysP).</text>
</comment>
<comment type="subcellular location">
    <subcellularLocation>
        <location evidence="1">Cell inner membrane</location>
        <topology evidence="1">Peripheral membrane protein</topology>
    </subcellularLocation>
</comment>
<comment type="similarity">
    <text evidence="1">Belongs to the ABC transporter superfamily. Sulfate/tungstate importer (TC 3.A.1.6) family.</text>
</comment>
<sequence>MSIHIQQVNKHFGNFVAVDSVNLEIKTGELTALLGPSGSGKTTLLRIIAGLEQADSGIVKFNGEDITTQHVSERGVGFVFQHYALFKHMTVFENVAYGLTVRPRKTRPSKAEIAEKVHSLLKLVQLDWTADRYPSQLSGGQRQRIALARALAVEPKVLLLDEPFGALDAKVRAELRRWLRRLHDEINVTTVFVTHDQEEALEVADKIVVMNKGRIEQQGTPEEVYDTPSNPFVYEFLGNVNLFHARVKHGHSTIGNIHIPSPEHAGGEEQQGLAYVRPHEIEVLTQPTENAIKVNLDLVTIVGPVARLEVLTEIDEQLIHVELSKVQFKQLGISKGDNAWIQPRYSKVFLGEGI</sequence>
<feature type="chain" id="PRO_0000092293" description="Sulfate/thiosulfate import ATP-binding protein CysA 2">
    <location>
        <begin position="1"/>
        <end position="354"/>
    </location>
</feature>
<feature type="domain" description="ABC transporter" evidence="1">
    <location>
        <begin position="3"/>
        <end position="237"/>
    </location>
</feature>
<feature type="binding site" evidence="1">
    <location>
        <begin position="35"/>
        <end position="42"/>
    </location>
    <ligand>
        <name>ATP</name>
        <dbReference type="ChEBI" id="CHEBI:30616"/>
    </ligand>
</feature>